<keyword id="KW-0378">Hydrolase</keyword>
<keyword id="KW-0441">Lipid A biosynthesis</keyword>
<keyword id="KW-0444">Lipid biosynthesis</keyword>
<keyword id="KW-0443">Lipid metabolism</keyword>
<keyword id="KW-0479">Metal-binding</keyword>
<keyword id="KW-1185">Reference proteome</keyword>
<keyword id="KW-0862">Zinc</keyword>
<gene>
    <name evidence="1" type="primary">lpxC</name>
    <name type="ordered locus">EcE24377A_0098</name>
</gene>
<dbReference type="EC" id="3.5.1.108" evidence="1"/>
<dbReference type="EMBL" id="CP000800">
    <property type="protein sequence ID" value="ABV18424.1"/>
    <property type="molecule type" value="Genomic_DNA"/>
</dbReference>
<dbReference type="RefSeq" id="WP_000595482.1">
    <property type="nucleotide sequence ID" value="NC_009801.1"/>
</dbReference>
<dbReference type="BMRB" id="A7ZHI7"/>
<dbReference type="SMR" id="A7ZHI7"/>
<dbReference type="GeneID" id="93777338"/>
<dbReference type="KEGG" id="ecw:EcE24377A_0098"/>
<dbReference type="HOGENOM" id="CLU_046528_1_0_6"/>
<dbReference type="UniPathway" id="UPA00359">
    <property type="reaction ID" value="UER00478"/>
</dbReference>
<dbReference type="Proteomes" id="UP000001122">
    <property type="component" value="Chromosome"/>
</dbReference>
<dbReference type="GO" id="GO:0016020">
    <property type="term" value="C:membrane"/>
    <property type="evidence" value="ECO:0007669"/>
    <property type="project" value="GOC"/>
</dbReference>
<dbReference type="GO" id="GO:0046872">
    <property type="term" value="F:metal ion binding"/>
    <property type="evidence" value="ECO:0007669"/>
    <property type="project" value="UniProtKB-KW"/>
</dbReference>
<dbReference type="GO" id="GO:0103117">
    <property type="term" value="F:UDP-3-O-acyl-N-acetylglucosamine deacetylase activity"/>
    <property type="evidence" value="ECO:0007669"/>
    <property type="project" value="UniProtKB-UniRule"/>
</dbReference>
<dbReference type="GO" id="GO:0009245">
    <property type="term" value="P:lipid A biosynthetic process"/>
    <property type="evidence" value="ECO:0007669"/>
    <property type="project" value="UniProtKB-UniRule"/>
</dbReference>
<dbReference type="FunFam" id="3.30.1700.10:FF:000001">
    <property type="entry name" value="UDP-3-O-acyl-N-acetylglucosamine deacetylase"/>
    <property type="match status" value="1"/>
</dbReference>
<dbReference type="FunFam" id="3.30.230.20:FF:000001">
    <property type="entry name" value="UDP-3-O-acyl-N-acetylglucosamine deacetylase"/>
    <property type="match status" value="1"/>
</dbReference>
<dbReference type="Gene3D" id="3.30.230.20">
    <property type="entry name" value="lpxc deacetylase, domain 1"/>
    <property type="match status" value="1"/>
</dbReference>
<dbReference type="Gene3D" id="3.30.1700.10">
    <property type="entry name" value="lpxc deacetylase, domain 2"/>
    <property type="match status" value="1"/>
</dbReference>
<dbReference type="HAMAP" id="MF_00388">
    <property type="entry name" value="LpxC"/>
    <property type="match status" value="1"/>
</dbReference>
<dbReference type="InterPro" id="IPR020568">
    <property type="entry name" value="Ribosomal_Su5_D2-typ_SF"/>
</dbReference>
<dbReference type="InterPro" id="IPR004463">
    <property type="entry name" value="UDP-acyl_GlcNac_deAcase"/>
</dbReference>
<dbReference type="InterPro" id="IPR011334">
    <property type="entry name" value="UDP-acyl_GlcNac_deAcase_C"/>
</dbReference>
<dbReference type="InterPro" id="IPR015870">
    <property type="entry name" value="UDP-acyl_N-AcGlcN_deAcase_N"/>
</dbReference>
<dbReference type="NCBIfam" id="TIGR00325">
    <property type="entry name" value="lpxC"/>
    <property type="match status" value="1"/>
</dbReference>
<dbReference type="PANTHER" id="PTHR33694">
    <property type="entry name" value="UDP-3-O-ACYL-N-ACETYLGLUCOSAMINE DEACETYLASE 1, MITOCHONDRIAL-RELATED"/>
    <property type="match status" value="1"/>
</dbReference>
<dbReference type="PANTHER" id="PTHR33694:SF1">
    <property type="entry name" value="UDP-3-O-ACYL-N-ACETYLGLUCOSAMINE DEACETYLASE 1, MITOCHONDRIAL-RELATED"/>
    <property type="match status" value="1"/>
</dbReference>
<dbReference type="Pfam" id="PF03331">
    <property type="entry name" value="LpxC"/>
    <property type="match status" value="1"/>
</dbReference>
<dbReference type="SUPFAM" id="SSF54211">
    <property type="entry name" value="Ribosomal protein S5 domain 2-like"/>
    <property type="match status" value="2"/>
</dbReference>
<proteinExistence type="inferred from homology"/>
<feature type="chain" id="PRO_1000060737" description="UDP-3-O-acyl-N-acetylglucosamine deacetylase">
    <location>
        <begin position="1"/>
        <end position="305"/>
    </location>
</feature>
<feature type="active site" description="Proton donor" evidence="1">
    <location>
        <position position="265"/>
    </location>
</feature>
<feature type="binding site" evidence="1">
    <location>
        <position position="79"/>
    </location>
    <ligand>
        <name>Zn(2+)</name>
        <dbReference type="ChEBI" id="CHEBI:29105"/>
    </ligand>
</feature>
<feature type="binding site" evidence="1">
    <location>
        <position position="238"/>
    </location>
    <ligand>
        <name>Zn(2+)</name>
        <dbReference type="ChEBI" id="CHEBI:29105"/>
    </ligand>
</feature>
<feature type="binding site" evidence="1">
    <location>
        <position position="242"/>
    </location>
    <ligand>
        <name>Zn(2+)</name>
        <dbReference type="ChEBI" id="CHEBI:29105"/>
    </ligand>
</feature>
<protein>
    <recommendedName>
        <fullName evidence="1">UDP-3-O-acyl-N-acetylglucosamine deacetylase</fullName>
        <shortName evidence="1">UDP-3-O-acyl-GlcNAc deacetylase</shortName>
        <ecNumber evidence="1">3.5.1.108</ecNumber>
    </recommendedName>
    <alternativeName>
        <fullName evidence="1">UDP-3-O-[R-3-hydroxymyristoyl]-N-acetylglucosamine deacetylase</fullName>
    </alternativeName>
</protein>
<accession>A7ZHI7</accession>
<organism>
    <name type="scientific">Escherichia coli O139:H28 (strain E24377A / ETEC)</name>
    <dbReference type="NCBI Taxonomy" id="331111"/>
    <lineage>
        <taxon>Bacteria</taxon>
        <taxon>Pseudomonadati</taxon>
        <taxon>Pseudomonadota</taxon>
        <taxon>Gammaproteobacteria</taxon>
        <taxon>Enterobacterales</taxon>
        <taxon>Enterobacteriaceae</taxon>
        <taxon>Escherichia</taxon>
    </lineage>
</organism>
<sequence>MIKQRTLKRIVQATGVGLHTGKKVTLTLRPAPANTGVIYRRTDLNPPVDFPADAKSVRDTMLCTCLVNEHDVRISTVEHLNAALAGLGIDNIVIEVNAPEIPIMDGSAAPFVYLLLDAGIDELNCAKKFVRIKETVRVEDGDKWAEFKPYNGFSLDFTIDFNHPAIDSSNQRYAMNFSADAFMRQISRARTFGFMRDIEYLQSRGLCLGGSFDCAIVVDDYRVLNEDGLRFEDEFVRHKMLDAIGDLFMCGHNIIGAFTAYKSGHALNNKLLQAVLAKQEAWEYVTFQDDAELPLAFKAPSAVLA</sequence>
<evidence type="ECO:0000255" key="1">
    <source>
        <dbReference type="HAMAP-Rule" id="MF_00388"/>
    </source>
</evidence>
<reference key="1">
    <citation type="journal article" date="2008" name="J. Bacteriol.">
        <title>The pangenome structure of Escherichia coli: comparative genomic analysis of E. coli commensal and pathogenic isolates.</title>
        <authorList>
            <person name="Rasko D.A."/>
            <person name="Rosovitz M.J."/>
            <person name="Myers G.S.A."/>
            <person name="Mongodin E.F."/>
            <person name="Fricke W.F."/>
            <person name="Gajer P."/>
            <person name="Crabtree J."/>
            <person name="Sebaihia M."/>
            <person name="Thomson N.R."/>
            <person name="Chaudhuri R."/>
            <person name="Henderson I.R."/>
            <person name="Sperandio V."/>
            <person name="Ravel J."/>
        </authorList>
    </citation>
    <scope>NUCLEOTIDE SEQUENCE [LARGE SCALE GENOMIC DNA]</scope>
    <source>
        <strain>E24377A / ETEC</strain>
    </source>
</reference>
<comment type="function">
    <text evidence="1">Catalyzes the hydrolysis of UDP-3-O-myristoyl-N-acetylglucosamine to form UDP-3-O-myristoylglucosamine and acetate, the committed step in lipid A biosynthesis.</text>
</comment>
<comment type="catalytic activity">
    <reaction evidence="1">
        <text>a UDP-3-O-[(3R)-3-hydroxyacyl]-N-acetyl-alpha-D-glucosamine + H2O = a UDP-3-O-[(3R)-3-hydroxyacyl]-alpha-D-glucosamine + acetate</text>
        <dbReference type="Rhea" id="RHEA:67816"/>
        <dbReference type="ChEBI" id="CHEBI:15377"/>
        <dbReference type="ChEBI" id="CHEBI:30089"/>
        <dbReference type="ChEBI" id="CHEBI:137740"/>
        <dbReference type="ChEBI" id="CHEBI:173225"/>
        <dbReference type="EC" id="3.5.1.108"/>
    </reaction>
</comment>
<comment type="cofactor">
    <cofactor evidence="1">
        <name>Zn(2+)</name>
        <dbReference type="ChEBI" id="CHEBI:29105"/>
    </cofactor>
</comment>
<comment type="pathway">
    <text evidence="1">Glycolipid biosynthesis; lipid IV(A) biosynthesis; lipid IV(A) from (3R)-3-hydroxytetradecanoyl-[acyl-carrier-protein] and UDP-N-acetyl-alpha-D-glucosamine: step 2/6.</text>
</comment>
<comment type="similarity">
    <text evidence="1">Belongs to the LpxC family.</text>
</comment>
<name>LPXC_ECO24</name>